<gene>
    <name type="primary">rps4</name>
</gene>
<geneLocation type="chloroplast"/>
<sequence>MSRYRGPRFKKIRRLGALPGLTSKRPRAGSDLRNQSRSGKKSQYRIRLEEKQKLRFHYGLTERQLLKYVRIAGKAKGSTGQVLLQLLEMRLDNTLFRLGMALTIPQARQLVNHGHILVNGRIVDIPSYRCKPRDIITVKDEQNSRTLVQNLLDSSAPEELPKHLTLHTFQYEGLVNQIIDRKCVGLKINELLVVEYYSRQT</sequence>
<organism>
    <name type="scientific">Aethionema grandiflorum</name>
    <name type="common">Persian stone-cress</name>
    <dbReference type="NCBI Taxonomy" id="72657"/>
    <lineage>
        <taxon>Eukaryota</taxon>
        <taxon>Viridiplantae</taxon>
        <taxon>Streptophyta</taxon>
        <taxon>Embryophyta</taxon>
        <taxon>Tracheophyta</taxon>
        <taxon>Spermatophyta</taxon>
        <taxon>Magnoliopsida</taxon>
        <taxon>eudicotyledons</taxon>
        <taxon>Gunneridae</taxon>
        <taxon>Pentapetalae</taxon>
        <taxon>rosids</taxon>
        <taxon>malvids</taxon>
        <taxon>Brassicales</taxon>
        <taxon>Brassicaceae</taxon>
        <taxon>Aethionemeae</taxon>
        <taxon>Aethionema</taxon>
    </lineage>
</organism>
<reference key="1">
    <citation type="submission" date="2007-03" db="EMBL/GenBank/DDBJ databases">
        <title>Sequencing analysis of Aethionema grandiflorum chloroplast DNA.</title>
        <authorList>
            <person name="Hosouchi T."/>
            <person name="Tsuruoka H."/>
            <person name="Kotani H."/>
        </authorList>
    </citation>
    <scope>NUCLEOTIDE SEQUENCE [LARGE SCALE GENOMIC DNA]</scope>
</reference>
<keyword id="KW-0150">Chloroplast</keyword>
<keyword id="KW-0934">Plastid</keyword>
<keyword id="KW-0687">Ribonucleoprotein</keyword>
<keyword id="KW-0689">Ribosomal protein</keyword>
<keyword id="KW-0694">RNA-binding</keyword>
<keyword id="KW-0699">rRNA-binding</keyword>
<evidence type="ECO:0000250" key="1"/>
<evidence type="ECO:0000256" key="2">
    <source>
        <dbReference type="SAM" id="MobiDB-lite"/>
    </source>
</evidence>
<evidence type="ECO:0000305" key="3"/>
<protein>
    <recommendedName>
        <fullName evidence="3">Small ribosomal subunit protein uS4c</fullName>
    </recommendedName>
    <alternativeName>
        <fullName>30S ribosomal protein S4, chloroplastic</fullName>
    </alternativeName>
</protein>
<name>RR4_AETGR</name>
<comment type="function">
    <text evidence="1">One of the primary rRNA binding proteins, it binds directly to 16S rRNA where it nucleates assembly of the body of the 30S subunit.</text>
</comment>
<comment type="function">
    <text evidence="1">With S5 and S12 plays an important role in translational accuracy.</text>
</comment>
<comment type="subunit">
    <text evidence="1">Part of the 30S ribosomal subunit. Contacts protein S5. The interaction surface between S4 and S5 is involved in control of translational fidelity (By similarity).</text>
</comment>
<comment type="subcellular location">
    <subcellularLocation>
        <location>Plastid</location>
        <location>Chloroplast</location>
    </subcellularLocation>
</comment>
<comment type="similarity">
    <text evidence="3">Belongs to the universal ribosomal protein uS4 family.</text>
</comment>
<feature type="chain" id="PRO_0000293417" description="Small ribosomal subunit protein uS4c">
    <location>
        <begin position="1"/>
        <end position="201"/>
    </location>
</feature>
<feature type="domain" description="S4 RNA-binding">
    <location>
        <begin position="89"/>
        <end position="152"/>
    </location>
</feature>
<feature type="region of interest" description="Disordered" evidence="2">
    <location>
        <begin position="20"/>
        <end position="44"/>
    </location>
</feature>
<proteinExistence type="inferred from homology"/>
<dbReference type="EMBL" id="AP009367">
    <property type="protein sequence ID" value="BAF49856.1"/>
    <property type="molecule type" value="Genomic_DNA"/>
</dbReference>
<dbReference type="RefSeq" id="YP_001123032.1">
    <property type="nucleotide sequence ID" value="NC_009266.1"/>
</dbReference>
<dbReference type="SMR" id="A4QJK1"/>
<dbReference type="GeneID" id="4962338"/>
<dbReference type="GO" id="GO:0009507">
    <property type="term" value="C:chloroplast"/>
    <property type="evidence" value="ECO:0007669"/>
    <property type="project" value="UniProtKB-SubCell"/>
</dbReference>
<dbReference type="GO" id="GO:0015935">
    <property type="term" value="C:small ribosomal subunit"/>
    <property type="evidence" value="ECO:0007669"/>
    <property type="project" value="InterPro"/>
</dbReference>
<dbReference type="GO" id="GO:0019843">
    <property type="term" value="F:rRNA binding"/>
    <property type="evidence" value="ECO:0007669"/>
    <property type="project" value="UniProtKB-UniRule"/>
</dbReference>
<dbReference type="GO" id="GO:0003735">
    <property type="term" value="F:structural constituent of ribosome"/>
    <property type="evidence" value="ECO:0007669"/>
    <property type="project" value="InterPro"/>
</dbReference>
<dbReference type="GO" id="GO:0042274">
    <property type="term" value="P:ribosomal small subunit biogenesis"/>
    <property type="evidence" value="ECO:0007669"/>
    <property type="project" value="TreeGrafter"/>
</dbReference>
<dbReference type="GO" id="GO:0006412">
    <property type="term" value="P:translation"/>
    <property type="evidence" value="ECO:0007669"/>
    <property type="project" value="UniProtKB-UniRule"/>
</dbReference>
<dbReference type="CDD" id="cd00165">
    <property type="entry name" value="S4"/>
    <property type="match status" value="1"/>
</dbReference>
<dbReference type="FunFam" id="1.10.1050.10:FF:000002">
    <property type="entry name" value="30S ribosomal protein S4, chloroplastic"/>
    <property type="match status" value="1"/>
</dbReference>
<dbReference type="FunFam" id="3.10.290.10:FF:000081">
    <property type="entry name" value="30S ribosomal protein S4, chloroplastic"/>
    <property type="match status" value="1"/>
</dbReference>
<dbReference type="Gene3D" id="1.10.1050.10">
    <property type="entry name" value="Ribosomal Protein S4 Delta 41, Chain A, domain 1"/>
    <property type="match status" value="1"/>
</dbReference>
<dbReference type="Gene3D" id="3.10.290.10">
    <property type="entry name" value="RNA-binding S4 domain"/>
    <property type="match status" value="1"/>
</dbReference>
<dbReference type="HAMAP" id="MF_01306_B">
    <property type="entry name" value="Ribosomal_uS4_B"/>
    <property type="match status" value="1"/>
</dbReference>
<dbReference type="InterPro" id="IPR022801">
    <property type="entry name" value="Ribosomal_uS4"/>
</dbReference>
<dbReference type="InterPro" id="IPR005709">
    <property type="entry name" value="Ribosomal_uS4_bac-type"/>
</dbReference>
<dbReference type="InterPro" id="IPR018079">
    <property type="entry name" value="Ribosomal_uS4_CS"/>
</dbReference>
<dbReference type="InterPro" id="IPR001912">
    <property type="entry name" value="Ribosomal_uS4_N"/>
</dbReference>
<dbReference type="InterPro" id="IPR002942">
    <property type="entry name" value="S4_RNA-bd"/>
</dbReference>
<dbReference type="InterPro" id="IPR036986">
    <property type="entry name" value="S4_RNA-bd_sf"/>
</dbReference>
<dbReference type="NCBIfam" id="NF003717">
    <property type="entry name" value="PRK05327.1"/>
    <property type="match status" value="1"/>
</dbReference>
<dbReference type="NCBIfam" id="TIGR01017">
    <property type="entry name" value="rpsD_bact"/>
    <property type="match status" value="1"/>
</dbReference>
<dbReference type="PANTHER" id="PTHR11831">
    <property type="entry name" value="30S 40S RIBOSOMAL PROTEIN"/>
    <property type="match status" value="1"/>
</dbReference>
<dbReference type="PANTHER" id="PTHR11831:SF4">
    <property type="entry name" value="SMALL RIBOSOMAL SUBUNIT PROTEIN US4M"/>
    <property type="match status" value="1"/>
</dbReference>
<dbReference type="Pfam" id="PF00163">
    <property type="entry name" value="Ribosomal_S4"/>
    <property type="match status" value="1"/>
</dbReference>
<dbReference type="Pfam" id="PF01479">
    <property type="entry name" value="S4"/>
    <property type="match status" value="1"/>
</dbReference>
<dbReference type="SMART" id="SM01390">
    <property type="entry name" value="Ribosomal_S4"/>
    <property type="match status" value="1"/>
</dbReference>
<dbReference type="SMART" id="SM00363">
    <property type="entry name" value="S4"/>
    <property type="match status" value="1"/>
</dbReference>
<dbReference type="SUPFAM" id="SSF55174">
    <property type="entry name" value="Alpha-L RNA-binding motif"/>
    <property type="match status" value="1"/>
</dbReference>
<dbReference type="PROSITE" id="PS00632">
    <property type="entry name" value="RIBOSOMAL_S4"/>
    <property type="match status" value="1"/>
</dbReference>
<dbReference type="PROSITE" id="PS50889">
    <property type="entry name" value="S4"/>
    <property type="match status" value="1"/>
</dbReference>
<accession>A4QJK1</accession>